<name>CA13_CONPL</name>
<feature type="propeptide" id="PRO_0000370684" evidence="1">
    <location>
        <begin position="1" status="less than"/>
        <end position="21"/>
    </location>
</feature>
<feature type="peptide" id="PRO_0000370685" description="Alpha-conotoxin-like Pu1.3">
    <location>
        <begin position="22"/>
        <end position="36"/>
    </location>
</feature>
<feature type="disulfide bond" evidence="2">
    <location>
        <begin position="24"/>
        <end position="30"/>
    </location>
</feature>
<feature type="disulfide bond" evidence="2">
    <location>
        <begin position="25"/>
        <end position="36"/>
    </location>
</feature>
<feature type="non-terminal residue">
    <location>
        <position position="1"/>
    </location>
</feature>
<evidence type="ECO:0000250" key="1"/>
<evidence type="ECO:0000250" key="2">
    <source>
        <dbReference type="UniProtKB" id="P69657"/>
    </source>
</evidence>
<evidence type="ECO:0000305" key="3"/>
<organism>
    <name type="scientific">Conus pulicarius</name>
    <name type="common">Flea-bitten cone</name>
    <dbReference type="NCBI Taxonomy" id="93154"/>
    <lineage>
        <taxon>Eukaryota</taxon>
        <taxon>Metazoa</taxon>
        <taxon>Spiralia</taxon>
        <taxon>Lophotrochozoa</taxon>
        <taxon>Mollusca</taxon>
        <taxon>Gastropoda</taxon>
        <taxon>Caenogastropoda</taxon>
        <taxon>Neogastropoda</taxon>
        <taxon>Conoidea</taxon>
        <taxon>Conidae</taxon>
        <taxon>Conus</taxon>
    </lineage>
</organism>
<dbReference type="EMBL" id="DQ311079">
    <property type="protein sequence ID" value="ABD33871.1"/>
    <property type="molecule type" value="Genomic_DNA"/>
</dbReference>
<dbReference type="ConoServer" id="569">
    <property type="toxin name" value="Pu1.3 precursor"/>
</dbReference>
<dbReference type="GO" id="GO:0005576">
    <property type="term" value="C:extracellular region"/>
    <property type="evidence" value="ECO:0007669"/>
    <property type="project" value="UniProtKB-SubCell"/>
</dbReference>
<dbReference type="GO" id="GO:0035792">
    <property type="term" value="C:host cell postsynaptic membrane"/>
    <property type="evidence" value="ECO:0007669"/>
    <property type="project" value="UniProtKB-KW"/>
</dbReference>
<dbReference type="GO" id="GO:0030550">
    <property type="term" value="F:acetylcholine receptor inhibitor activity"/>
    <property type="evidence" value="ECO:0007669"/>
    <property type="project" value="UniProtKB-KW"/>
</dbReference>
<dbReference type="GO" id="GO:0099106">
    <property type="term" value="F:ion channel regulator activity"/>
    <property type="evidence" value="ECO:0007669"/>
    <property type="project" value="UniProtKB-KW"/>
</dbReference>
<dbReference type="GO" id="GO:0090729">
    <property type="term" value="F:toxin activity"/>
    <property type="evidence" value="ECO:0007669"/>
    <property type="project" value="UniProtKB-KW"/>
</dbReference>
<dbReference type="InterPro" id="IPR009958">
    <property type="entry name" value="Conotoxin_a-typ"/>
</dbReference>
<dbReference type="Pfam" id="PF07365">
    <property type="entry name" value="Toxin_8"/>
    <property type="match status" value="1"/>
</dbReference>
<accession>A1X8D9</accession>
<sequence length="36" mass="3743">SDGRNAGADRKGFGLISQMFKLSCCADPACKHTPGC</sequence>
<protein>
    <recommendedName>
        <fullName>Alpha-conotoxin-like Pu1.3</fullName>
    </recommendedName>
</protein>
<reference key="1">
    <citation type="journal article" date="2007" name="Toxicon">
        <title>From the identification of gene organization of alpha conotoxins to the cloning of novel toxins.</title>
        <authorList>
            <person name="Yuan D.-D."/>
            <person name="Han Y.-H."/>
            <person name="Wang C.-G."/>
            <person name="Chi C.-W."/>
        </authorList>
    </citation>
    <scope>NUCLEOTIDE SEQUENCE [GENOMIC DNA]</scope>
</reference>
<comment type="function">
    <text evidence="1">Alpha-conotoxins act on postsynaptic membranes, they bind to the nicotinic acetylcholine receptors (nAChR) and thus inhibit them.</text>
</comment>
<comment type="subcellular location">
    <subcellularLocation>
        <location evidence="3">Secreted</location>
    </subcellularLocation>
</comment>
<comment type="tissue specificity">
    <text evidence="3">Expressed by the venom duct.</text>
</comment>
<comment type="domain">
    <text evidence="3">The cysteine framework is I (CC-C-C). Alpha4/5 pattern.</text>
</comment>
<comment type="similarity">
    <text evidence="3">Belongs to the conotoxin A superfamily.</text>
</comment>
<proteinExistence type="inferred from homology"/>
<keyword id="KW-0008">Acetylcholine receptor inhibiting toxin</keyword>
<keyword id="KW-1015">Disulfide bond</keyword>
<keyword id="KW-0872">Ion channel impairing toxin</keyword>
<keyword id="KW-0528">Neurotoxin</keyword>
<keyword id="KW-0629">Postsynaptic neurotoxin</keyword>
<keyword id="KW-0964">Secreted</keyword>
<keyword id="KW-0800">Toxin</keyword>